<feature type="chain" id="PRO_0000244121" description="Ribosome maturation factor RimM">
    <location>
        <begin position="1"/>
        <end position="176"/>
    </location>
</feature>
<feature type="domain" description="PRC barrel" evidence="1">
    <location>
        <begin position="97"/>
        <end position="176"/>
    </location>
</feature>
<comment type="function">
    <text evidence="1">An accessory protein needed during the final step in the assembly of 30S ribosomal subunit, possibly for assembly of the head region. Essential for efficient processing of 16S rRNA. May be needed both before and after RbfA during the maturation of 16S rRNA. It has affinity for free ribosomal 30S subunits but not for 70S ribosomes.</text>
</comment>
<comment type="subunit">
    <text evidence="1">Binds ribosomal protein uS19.</text>
</comment>
<comment type="subcellular location">
    <subcellularLocation>
        <location evidence="1">Cytoplasm</location>
    </subcellularLocation>
</comment>
<comment type="domain">
    <text evidence="1">The PRC barrel domain binds ribosomal protein uS19.</text>
</comment>
<comment type="similarity">
    <text evidence="1">Belongs to the RimM family.</text>
</comment>
<name>RIMM_COLP3</name>
<reference key="1">
    <citation type="journal article" date="2005" name="Proc. Natl. Acad. Sci. U.S.A.">
        <title>The psychrophilic lifestyle as revealed by the genome sequence of Colwellia psychrerythraea 34H through genomic and proteomic analyses.</title>
        <authorList>
            <person name="Methe B.A."/>
            <person name="Nelson K.E."/>
            <person name="Deming J.W."/>
            <person name="Momen B."/>
            <person name="Melamud E."/>
            <person name="Zhang X."/>
            <person name="Moult J."/>
            <person name="Madupu R."/>
            <person name="Nelson W.C."/>
            <person name="Dodson R.J."/>
            <person name="Brinkac L.M."/>
            <person name="Daugherty S.C."/>
            <person name="Durkin A.S."/>
            <person name="DeBoy R.T."/>
            <person name="Kolonay J.F."/>
            <person name="Sullivan S.A."/>
            <person name="Zhou L."/>
            <person name="Davidsen T.M."/>
            <person name="Wu M."/>
            <person name="Huston A.L."/>
            <person name="Lewis M."/>
            <person name="Weaver B."/>
            <person name="Weidman J.F."/>
            <person name="Khouri H."/>
            <person name="Utterback T.R."/>
            <person name="Feldblyum T.V."/>
            <person name="Fraser C.M."/>
        </authorList>
    </citation>
    <scope>NUCLEOTIDE SEQUENCE [LARGE SCALE GENOMIC DNA]</scope>
    <source>
        <strain>34H / ATCC BAA-681</strain>
    </source>
</reference>
<accession>Q47WU9</accession>
<keyword id="KW-0143">Chaperone</keyword>
<keyword id="KW-0963">Cytoplasm</keyword>
<keyword id="KW-0690">Ribosome biogenesis</keyword>
<keyword id="KW-0698">rRNA processing</keyword>
<dbReference type="EMBL" id="CP000083">
    <property type="protein sequence ID" value="AAZ27865.1"/>
    <property type="molecule type" value="Genomic_DNA"/>
</dbReference>
<dbReference type="RefSeq" id="WP_011044804.1">
    <property type="nucleotide sequence ID" value="NC_003910.7"/>
</dbReference>
<dbReference type="SMR" id="Q47WU9"/>
<dbReference type="STRING" id="167879.CPS_4068"/>
<dbReference type="DNASU" id="3522124"/>
<dbReference type="KEGG" id="cps:CPS_4068"/>
<dbReference type="eggNOG" id="COG0806">
    <property type="taxonomic scope" value="Bacteria"/>
</dbReference>
<dbReference type="HOGENOM" id="CLU_077636_1_0_6"/>
<dbReference type="Proteomes" id="UP000000547">
    <property type="component" value="Chromosome"/>
</dbReference>
<dbReference type="GO" id="GO:0005737">
    <property type="term" value="C:cytoplasm"/>
    <property type="evidence" value="ECO:0007669"/>
    <property type="project" value="UniProtKB-SubCell"/>
</dbReference>
<dbReference type="GO" id="GO:0005840">
    <property type="term" value="C:ribosome"/>
    <property type="evidence" value="ECO:0007669"/>
    <property type="project" value="InterPro"/>
</dbReference>
<dbReference type="GO" id="GO:0043022">
    <property type="term" value="F:ribosome binding"/>
    <property type="evidence" value="ECO:0007669"/>
    <property type="project" value="InterPro"/>
</dbReference>
<dbReference type="GO" id="GO:0042274">
    <property type="term" value="P:ribosomal small subunit biogenesis"/>
    <property type="evidence" value="ECO:0007669"/>
    <property type="project" value="UniProtKB-UniRule"/>
</dbReference>
<dbReference type="GO" id="GO:0006364">
    <property type="term" value="P:rRNA processing"/>
    <property type="evidence" value="ECO:0007669"/>
    <property type="project" value="UniProtKB-UniRule"/>
</dbReference>
<dbReference type="Gene3D" id="2.30.30.240">
    <property type="entry name" value="PRC-barrel domain"/>
    <property type="match status" value="1"/>
</dbReference>
<dbReference type="Gene3D" id="2.40.30.60">
    <property type="entry name" value="RimM"/>
    <property type="match status" value="1"/>
</dbReference>
<dbReference type="HAMAP" id="MF_00014">
    <property type="entry name" value="Ribosome_mat_RimM"/>
    <property type="match status" value="1"/>
</dbReference>
<dbReference type="InterPro" id="IPR027275">
    <property type="entry name" value="PRC-brl_dom"/>
</dbReference>
<dbReference type="InterPro" id="IPR011033">
    <property type="entry name" value="PRC_barrel-like_sf"/>
</dbReference>
<dbReference type="InterPro" id="IPR011961">
    <property type="entry name" value="RimM"/>
</dbReference>
<dbReference type="InterPro" id="IPR002676">
    <property type="entry name" value="RimM_N"/>
</dbReference>
<dbReference type="InterPro" id="IPR036976">
    <property type="entry name" value="RimM_N_sf"/>
</dbReference>
<dbReference type="InterPro" id="IPR009000">
    <property type="entry name" value="Transl_B-barrel_sf"/>
</dbReference>
<dbReference type="NCBIfam" id="TIGR02273">
    <property type="entry name" value="16S_RimM"/>
    <property type="match status" value="1"/>
</dbReference>
<dbReference type="PANTHER" id="PTHR33692">
    <property type="entry name" value="RIBOSOME MATURATION FACTOR RIMM"/>
    <property type="match status" value="1"/>
</dbReference>
<dbReference type="PANTHER" id="PTHR33692:SF1">
    <property type="entry name" value="RIBOSOME MATURATION FACTOR RIMM"/>
    <property type="match status" value="1"/>
</dbReference>
<dbReference type="Pfam" id="PF05239">
    <property type="entry name" value="PRC"/>
    <property type="match status" value="1"/>
</dbReference>
<dbReference type="Pfam" id="PF01782">
    <property type="entry name" value="RimM"/>
    <property type="match status" value="1"/>
</dbReference>
<dbReference type="SUPFAM" id="SSF50346">
    <property type="entry name" value="PRC-barrel domain"/>
    <property type="match status" value="1"/>
</dbReference>
<dbReference type="SUPFAM" id="SSF50447">
    <property type="entry name" value="Translation proteins"/>
    <property type="match status" value="1"/>
</dbReference>
<gene>
    <name evidence="1" type="primary">rimM</name>
    <name type="ordered locus">CPS_4068</name>
</gene>
<sequence length="176" mass="19831">MSTEEKKIILGKVGAVYGIKGWLKIHSFTDETEAILDYFPWSLKLGNNTQTVEITDWRKHNKVLIVKVAGIDDRDEAQALVGSEILTNEAALPELSEDDFYWRDLIGMSVVTNKGYDLGVVTDMMETGANDVLVVKANLKDGFSKKERLIPYLFEQVIESVSIENKQICVDWDPGF</sequence>
<organism>
    <name type="scientific">Colwellia psychrerythraea (strain 34H / ATCC BAA-681)</name>
    <name type="common">Vibrio psychroerythus</name>
    <dbReference type="NCBI Taxonomy" id="167879"/>
    <lineage>
        <taxon>Bacteria</taxon>
        <taxon>Pseudomonadati</taxon>
        <taxon>Pseudomonadota</taxon>
        <taxon>Gammaproteobacteria</taxon>
        <taxon>Alteromonadales</taxon>
        <taxon>Colwelliaceae</taxon>
        <taxon>Colwellia</taxon>
    </lineage>
</organism>
<proteinExistence type="inferred from homology"/>
<protein>
    <recommendedName>
        <fullName evidence="1">Ribosome maturation factor RimM</fullName>
    </recommendedName>
</protein>
<evidence type="ECO:0000255" key="1">
    <source>
        <dbReference type="HAMAP-Rule" id="MF_00014"/>
    </source>
</evidence>